<dbReference type="EMBL" id="AE008922">
    <property type="protein sequence ID" value="AAM42209.1"/>
    <property type="molecule type" value="Genomic_DNA"/>
</dbReference>
<dbReference type="RefSeq" id="NP_638285.1">
    <property type="nucleotide sequence ID" value="NC_003902.1"/>
</dbReference>
<dbReference type="RefSeq" id="WP_011038060.1">
    <property type="nucleotide sequence ID" value="NC_003902.1"/>
</dbReference>
<dbReference type="SMR" id="Q8P6N0"/>
<dbReference type="STRING" id="190485.XCC2937"/>
<dbReference type="EnsemblBacteria" id="AAM42209">
    <property type="protein sequence ID" value="AAM42209"/>
    <property type="gene ID" value="XCC2937"/>
</dbReference>
<dbReference type="KEGG" id="xcc:XCC2937"/>
<dbReference type="PATRIC" id="fig|190485.4.peg.3141"/>
<dbReference type="eggNOG" id="COG1235">
    <property type="taxonomic scope" value="Bacteria"/>
</dbReference>
<dbReference type="HOGENOM" id="CLU_061120_0_0_6"/>
<dbReference type="OrthoDB" id="9778305at2"/>
<dbReference type="UniPathway" id="UPA00539"/>
<dbReference type="Proteomes" id="UP000001010">
    <property type="component" value="Chromosome"/>
</dbReference>
<dbReference type="GO" id="GO:0018189">
    <property type="term" value="P:pyrroloquinoline quinone biosynthetic process"/>
    <property type="evidence" value="ECO:0007669"/>
    <property type="project" value="UniProtKB-UniRule"/>
</dbReference>
<dbReference type="CDD" id="cd16274">
    <property type="entry name" value="PQQB-like_MBL-fold"/>
    <property type="match status" value="1"/>
</dbReference>
<dbReference type="Gene3D" id="3.60.15.10">
    <property type="entry name" value="Ribonuclease Z/Hydroxyacylglutathione hydrolase-like"/>
    <property type="match status" value="1"/>
</dbReference>
<dbReference type="HAMAP" id="MF_00653">
    <property type="entry name" value="PQQ_syn_PqqB"/>
    <property type="match status" value="1"/>
</dbReference>
<dbReference type="InterPro" id="IPR001279">
    <property type="entry name" value="Metallo-B-lactamas"/>
</dbReference>
<dbReference type="InterPro" id="IPR011842">
    <property type="entry name" value="PQQ_synth_PqqB"/>
</dbReference>
<dbReference type="InterPro" id="IPR036866">
    <property type="entry name" value="RibonucZ/Hydroxyglut_hydro"/>
</dbReference>
<dbReference type="NCBIfam" id="TIGR02108">
    <property type="entry name" value="PQQ_syn_pqqB"/>
    <property type="match status" value="1"/>
</dbReference>
<dbReference type="PANTHER" id="PTHR42663:SF7">
    <property type="entry name" value="COENZYME PQQ SYNTHESIS PROTEIN B"/>
    <property type="match status" value="1"/>
</dbReference>
<dbReference type="PANTHER" id="PTHR42663">
    <property type="entry name" value="HYDROLASE C777.06C-RELATED-RELATED"/>
    <property type="match status" value="1"/>
</dbReference>
<dbReference type="Pfam" id="PF12706">
    <property type="entry name" value="Lactamase_B_2"/>
    <property type="match status" value="1"/>
</dbReference>
<dbReference type="SUPFAM" id="SSF56281">
    <property type="entry name" value="Metallo-hydrolase/oxidoreductase"/>
    <property type="match status" value="1"/>
</dbReference>
<feature type="chain" id="PRO_0000220012" description="Coenzyme PQQ synthesis protein B">
    <location>
        <begin position="1"/>
        <end position="299"/>
    </location>
</feature>
<sequence>MRIIVLGSAAGGGHPQWNCHTPASQRAWQQADGAQRRTQASIAVSADGQRWVLINASPDFRQQILATPALWPQHGLRHSPIESVLLTSGEIDHIAGLLSMRESQRFSLHASSRVLDLLAQNPIFDALNPQYVDRHPFALNTPLTLCDLQLTPFSVPGKVPLFMESRSGGDLAGSNEETLGLTIDDGRHRVHYIPGCAAMTDDLRARLHGAELVFFDGTLWRDDEMVQLGVSQKTGQRMGHMSIDGTDGTLAAFAQLQVARKVLIHINTTNPVLDAHSPEHAAVRAAGWDVAHDGLEISL</sequence>
<proteinExistence type="inferred from homology"/>
<gene>
    <name evidence="1" type="primary">pqqB</name>
    <name type="ordered locus">XCC2937</name>
</gene>
<accession>Q8P6N0</accession>
<name>PQQB_XANCP</name>
<evidence type="ECO:0000255" key="1">
    <source>
        <dbReference type="HAMAP-Rule" id="MF_00653"/>
    </source>
</evidence>
<protein>
    <recommendedName>
        <fullName evidence="1">Coenzyme PQQ synthesis protein B</fullName>
    </recommendedName>
    <alternativeName>
        <fullName evidence="1">Pyrroloquinoline quinone biosynthesis protein B</fullName>
    </alternativeName>
</protein>
<keyword id="KW-0884">PQQ biosynthesis</keyword>
<keyword id="KW-1185">Reference proteome</keyword>
<keyword id="KW-0813">Transport</keyword>
<reference key="1">
    <citation type="journal article" date="2002" name="Nature">
        <title>Comparison of the genomes of two Xanthomonas pathogens with differing host specificities.</title>
        <authorList>
            <person name="da Silva A.C.R."/>
            <person name="Ferro J.A."/>
            <person name="Reinach F.C."/>
            <person name="Farah C.S."/>
            <person name="Furlan L.R."/>
            <person name="Quaggio R.B."/>
            <person name="Monteiro-Vitorello C.B."/>
            <person name="Van Sluys M.A."/>
            <person name="Almeida N.F. Jr."/>
            <person name="Alves L.M.C."/>
            <person name="do Amaral A.M."/>
            <person name="Bertolini M.C."/>
            <person name="Camargo L.E.A."/>
            <person name="Camarotte G."/>
            <person name="Cannavan F."/>
            <person name="Cardozo J."/>
            <person name="Chambergo F."/>
            <person name="Ciapina L.P."/>
            <person name="Cicarelli R.M.B."/>
            <person name="Coutinho L.L."/>
            <person name="Cursino-Santos J.R."/>
            <person name="El-Dorry H."/>
            <person name="Faria J.B."/>
            <person name="Ferreira A.J.S."/>
            <person name="Ferreira R.C.C."/>
            <person name="Ferro M.I.T."/>
            <person name="Formighieri E.F."/>
            <person name="Franco M.C."/>
            <person name="Greggio C.C."/>
            <person name="Gruber A."/>
            <person name="Katsuyama A.M."/>
            <person name="Kishi L.T."/>
            <person name="Leite R.P."/>
            <person name="Lemos E.G.M."/>
            <person name="Lemos M.V.F."/>
            <person name="Locali E.C."/>
            <person name="Machado M.A."/>
            <person name="Madeira A.M.B.N."/>
            <person name="Martinez-Rossi N.M."/>
            <person name="Martins E.C."/>
            <person name="Meidanis J."/>
            <person name="Menck C.F.M."/>
            <person name="Miyaki C.Y."/>
            <person name="Moon D.H."/>
            <person name="Moreira L.M."/>
            <person name="Novo M.T.M."/>
            <person name="Okura V.K."/>
            <person name="Oliveira M.C."/>
            <person name="Oliveira V.R."/>
            <person name="Pereira H.A."/>
            <person name="Rossi A."/>
            <person name="Sena J.A.D."/>
            <person name="Silva C."/>
            <person name="de Souza R.F."/>
            <person name="Spinola L.A.F."/>
            <person name="Takita M.A."/>
            <person name="Tamura R.E."/>
            <person name="Teixeira E.C."/>
            <person name="Tezza R.I.D."/>
            <person name="Trindade dos Santos M."/>
            <person name="Truffi D."/>
            <person name="Tsai S.M."/>
            <person name="White F.F."/>
            <person name="Setubal J.C."/>
            <person name="Kitajima J.P."/>
        </authorList>
    </citation>
    <scope>NUCLEOTIDE SEQUENCE [LARGE SCALE GENOMIC DNA]</scope>
    <source>
        <strain>ATCC 33913 / DSM 3586 / NCPPB 528 / LMG 568 / P 25</strain>
    </source>
</reference>
<comment type="function">
    <text evidence="1">May be involved in the transport of PQQ or its precursor to the periplasm.</text>
</comment>
<comment type="pathway">
    <text evidence="1">Cofactor biosynthesis; pyrroloquinoline quinone biosynthesis.</text>
</comment>
<comment type="similarity">
    <text evidence="1">Belongs to the PqqB family.</text>
</comment>
<organism>
    <name type="scientific">Xanthomonas campestris pv. campestris (strain ATCC 33913 / DSM 3586 / NCPPB 528 / LMG 568 / P 25)</name>
    <dbReference type="NCBI Taxonomy" id="190485"/>
    <lineage>
        <taxon>Bacteria</taxon>
        <taxon>Pseudomonadati</taxon>
        <taxon>Pseudomonadota</taxon>
        <taxon>Gammaproteobacteria</taxon>
        <taxon>Lysobacterales</taxon>
        <taxon>Lysobacteraceae</taxon>
        <taxon>Xanthomonas</taxon>
    </lineage>
</organism>